<proteinExistence type="evidence at protein level"/>
<dbReference type="EC" id="1.7.7.1"/>
<dbReference type="EMBL" id="X07568">
    <property type="protein sequence ID" value="CAA30453.1"/>
    <property type="molecule type" value="mRNA"/>
</dbReference>
<dbReference type="EMBL" id="X17031">
    <property type="protein sequence ID" value="CAA34893.1"/>
    <property type="molecule type" value="Genomic_DNA"/>
</dbReference>
<dbReference type="PIR" id="S16603">
    <property type="entry name" value="S16603"/>
</dbReference>
<dbReference type="PDB" id="2AKJ">
    <property type="method" value="X-ray"/>
    <property type="resolution" value="2.80 A"/>
    <property type="chains" value="A=33-594"/>
</dbReference>
<dbReference type="PDBsum" id="2AKJ"/>
<dbReference type="SMR" id="P05314"/>
<dbReference type="OrthoDB" id="432685at2759"/>
<dbReference type="BRENDA" id="1.7.7.1">
    <property type="organism ID" value="5812"/>
</dbReference>
<dbReference type="UniPathway" id="UPA00653"/>
<dbReference type="EvolutionaryTrace" id="P05314"/>
<dbReference type="Proteomes" id="UP001155700">
    <property type="component" value="Unplaced"/>
</dbReference>
<dbReference type="GO" id="GO:0009507">
    <property type="term" value="C:chloroplast"/>
    <property type="evidence" value="ECO:0007669"/>
    <property type="project" value="UniProtKB-SubCell"/>
</dbReference>
<dbReference type="GO" id="GO:0051539">
    <property type="term" value="F:4 iron, 4 sulfur cluster binding"/>
    <property type="evidence" value="ECO:0007669"/>
    <property type="project" value="UniProtKB-KW"/>
</dbReference>
<dbReference type="GO" id="GO:0048307">
    <property type="term" value="F:ferredoxin-nitrite reductase activity"/>
    <property type="evidence" value="ECO:0007669"/>
    <property type="project" value="UniProtKB-EC"/>
</dbReference>
<dbReference type="GO" id="GO:0020037">
    <property type="term" value="F:heme binding"/>
    <property type="evidence" value="ECO:0007669"/>
    <property type="project" value="InterPro"/>
</dbReference>
<dbReference type="GO" id="GO:0046872">
    <property type="term" value="F:metal ion binding"/>
    <property type="evidence" value="ECO:0007669"/>
    <property type="project" value="UniProtKB-KW"/>
</dbReference>
<dbReference type="GO" id="GO:0042128">
    <property type="term" value="P:nitrate assimilation"/>
    <property type="evidence" value="ECO:0007669"/>
    <property type="project" value="UniProtKB-UniPathway"/>
</dbReference>
<dbReference type="Gene3D" id="3.90.480.20">
    <property type="match status" value="1"/>
</dbReference>
<dbReference type="Gene3D" id="3.30.413.10">
    <property type="entry name" value="Sulfite Reductase Hemoprotein, domain 1"/>
    <property type="match status" value="2"/>
</dbReference>
<dbReference type="InterPro" id="IPR051329">
    <property type="entry name" value="NIR_SIR_4Fe-4S"/>
</dbReference>
<dbReference type="InterPro" id="IPR005117">
    <property type="entry name" value="NiRdtase/SiRdtase_haem-b_fer"/>
</dbReference>
<dbReference type="InterPro" id="IPR036136">
    <property type="entry name" value="Nit/Sulf_reduc_fer-like_dom_sf"/>
</dbReference>
<dbReference type="InterPro" id="IPR006067">
    <property type="entry name" value="NO2/SO3_Rdtase_4Fe4S_dom"/>
</dbReference>
<dbReference type="InterPro" id="IPR045854">
    <property type="entry name" value="NO2/SO3_Rdtase_4Fe4S_sf"/>
</dbReference>
<dbReference type="InterPro" id="IPR006066">
    <property type="entry name" value="NO2/SO3_Rdtase_FeS/sirohaem_BS"/>
</dbReference>
<dbReference type="NCBIfam" id="NF007125">
    <property type="entry name" value="PRK09566.1"/>
    <property type="match status" value="1"/>
</dbReference>
<dbReference type="PANTHER" id="PTHR32439">
    <property type="entry name" value="FERREDOXIN--NITRITE REDUCTASE, CHLOROPLASTIC"/>
    <property type="match status" value="1"/>
</dbReference>
<dbReference type="PANTHER" id="PTHR32439:SF0">
    <property type="entry name" value="FERREDOXIN--NITRITE REDUCTASE, CHLOROPLASTIC"/>
    <property type="match status" value="1"/>
</dbReference>
<dbReference type="Pfam" id="PF01077">
    <property type="entry name" value="NIR_SIR"/>
    <property type="match status" value="2"/>
</dbReference>
<dbReference type="Pfam" id="PF03460">
    <property type="entry name" value="NIR_SIR_ferr"/>
    <property type="match status" value="2"/>
</dbReference>
<dbReference type="PRINTS" id="PR00397">
    <property type="entry name" value="SIROHAEM"/>
</dbReference>
<dbReference type="SUPFAM" id="SSF56014">
    <property type="entry name" value="Nitrite and sulphite reductase 4Fe-4S domain-like"/>
    <property type="match status" value="2"/>
</dbReference>
<dbReference type="SUPFAM" id="SSF55124">
    <property type="entry name" value="Nitrite/Sulfite reductase N-terminal domain-like"/>
    <property type="match status" value="2"/>
</dbReference>
<dbReference type="PROSITE" id="PS00365">
    <property type="entry name" value="NIR_SIR"/>
    <property type="match status" value="1"/>
</dbReference>
<evidence type="ECO:0000250" key="1"/>
<evidence type="ECO:0000256" key="2">
    <source>
        <dbReference type="SAM" id="MobiDB-lite"/>
    </source>
</evidence>
<evidence type="ECO:0000305" key="3"/>
<evidence type="ECO:0007829" key="4">
    <source>
        <dbReference type="PDB" id="2AKJ"/>
    </source>
</evidence>
<protein>
    <recommendedName>
        <fullName>Ferredoxin--nitrite reductase, chloroplastic</fullName>
        <ecNumber>1.7.7.1</ecNumber>
    </recommendedName>
</protein>
<organism>
    <name type="scientific">Spinacia oleracea</name>
    <name type="common">Spinach</name>
    <dbReference type="NCBI Taxonomy" id="3562"/>
    <lineage>
        <taxon>Eukaryota</taxon>
        <taxon>Viridiplantae</taxon>
        <taxon>Streptophyta</taxon>
        <taxon>Embryophyta</taxon>
        <taxon>Tracheophyta</taxon>
        <taxon>Spermatophyta</taxon>
        <taxon>Magnoliopsida</taxon>
        <taxon>eudicotyledons</taxon>
        <taxon>Gunneridae</taxon>
        <taxon>Pentapetalae</taxon>
        <taxon>Caryophyllales</taxon>
        <taxon>Chenopodiaceae</taxon>
        <taxon>Chenopodioideae</taxon>
        <taxon>Anserineae</taxon>
        <taxon>Spinacia</taxon>
    </lineage>
</organism>
<gene>
    <name type="primary">NIR</name>
</gene>
<sequence length="594" mass="66394">MASLPVNKIIPSSTTLLSSSNNNRRRNNSSIRCQKAVSPAAETAAVSPSVDAARLEPRVEERDGFWVLKEEFRSGINPAEKVKIEKDPMKLFIEDGISDLATLSMEEVDKSKHNKDDIDVRLKWLGLFHRRKHHYGRFMMRLKLPNGVTTSEQTRYLASVIKKYGKDGCADVTTRQNWQIRGVVLPDVPEIIKGLESVGLTSLQSGMDNVRNPVGNPLAGIDPHEIVDTRPFTNLISQFVTANSRGNLSITNLPRKWNPCVIGSHDLYEHPHINDLAYMPATKNGKFGFNLLVGGFFSIKRCEEAIPLDAWVSAEDVVPVCKAMLEAFRDLGFRGNRQKCRMMWLIDELGMEAFRGEVEKRMPEQVLERASSEELVQKDWERREYLGVHPQKQQGLSFVGLHIPVGRLQADEMEELARIADVYGSGELRLTVEQNIIIPNVENSKIDSLLNEPLLKERYSPEPPILMKGLVACTGSQFCGQAIIETKARALKVTEEVQRLVSVTRPVRMHWTGCPNSCGQVQVADIGFMGCMTRDENGKPCEGADVFVGGRIGSDSHLGDIYKKAVPCKDLVPVVAEILINQFGAVPREREEAE</sequence>
<comment type="catalytic activity">
    <reaction>
        <text>6 oxidized [2Fe-2S]-[ferredoxin] + NH4(+) + 2 H2O = nitrite + 6 reduced [2Fe-2S]-[ferredoxin] + 8 H(+)</text>
        <dbReference type="Rhea" id="RHEA:18041"/>
        <dbReference type="Rhea" id="RHEA-COMP:10000"/>
        <dbReference type="Rhea" id="RHEA-COMP:10001"/>
        <dbReference type="ChEBI" id="CHEBI:15377"/>
        <dbReference type="ChEBI" id="CHEBI:15378"/>
        <dbReference type="ChEBI" id="CHEBI:16301"/>
        <dbReference type="ChEBI" id="CHEBI:28938"/>
        <dbReference type="ChEBI" id="CHEBI:33737"/>
        <dbReference type="ChEBI" id="CHEBI:33738"/>
        <dbReference type="EC" id="1.7.7.1"/>
    </reaction>
</comment>
<comment type="cofactor">
    <cofactor>
        <name>siroheme</name>
        <dbReference type="ChEBI" id="CHEBI:60052"/>
    </cofactor>
    <text>Binds 1 siroheme per subunit.</text>
</comment>
<comment type="cofactor">
    <cofactor evidence="1">
        <name>[4Fe-4S] cluster</name>
        <dbReference type="ChEBI" id="CHEBI:49883"/>
    </cofactor>
    <text evidence="1">Binds 1 [4Fe-4S] cluster per subunit.</text>
</comment>
<comment type="pathway">
    <text>Nitrogen metabolism; nitrate reduction (assimilation).</text>
</comment>
<comment type="subunit">
    <text>Monomer.</text>
</comment>
<comment type="subcellular location">
    <subcellularLocation>
        <location>Plastid</location>
        <location>Chloroplast</location>
    </subcellularLocation>
</comment>
<comment type="induction">
    <text>By nitrate.</text>
</comment>
<comment type="similarity">
    <text evidence="3">Belongs to the nitrite and sulfite reductase 4Fe-4S domain family.</text>
</comment>
<feature type="transit peptide" description="Chloroplast">
    <location>
        <begin position="1"/>
        <end position="32"/>
    </location>
</feature>
<feature type="chain" id="PRO_0000019706" description="Ferredoxin--nitrite reductase, chloroplastic">
    <location>
        <begin position="33"/>
        <end position="594"/>
    </location>
</feature>
<feature type="region of interest" description="Disordered" evidence="2">
    <location>
        <begin position="13"/>
        <end position="36"/>
    </location>
</feature>
<feature type="compositionally biased region" description="Low complexity" evidence="2">
    <location>
        <begin position="13"/>
        <end position="22"/>
    </location>
</feature>
<feature type="binding site">
    <location>
        <position position="473"/>
    </location>
    <ligand>
        <name>[4Fe-4S] cluster</name>
        <dbReference type="ChEBI" id="CHEBI:49883"/>
    </ligand>
</feature>
<feature type="binding site">
    <location>
        <position position="479"/>
    </location>
    <ligand>
        <name>[4Fe-4S] cluster</name>
        <dbReference type="ChEBI" id="CHEBI:49883"/>
    </ligand>
</feature>
<feature type="binding site">
    <location>
        <position position="514"/>
    </location>
    <ligand>
        <name>[4Fe-4S] cluster</name>
        <dbReference type="ChEBI" id="CHEBI:49883"/>
    </ligand>
</feature>
<feature type="binding site">
    <location>
        <position position="518"/>
    </location>
    <ligand>
        <name>[4Fe-4S] cluster</name>
        <dbReference type="ChEBI" id="CHEBI:49883"/>
    </ligand>
</feature>
<feature type="binding site" description="axial binding residue">
    <location>
        <position position="518"/>
    </location>
    <ligand>
        <name>siroheme</name>
        <dbReference type="ChEBI" id="CHEBI:60052"/>
    </ligand>
    <ligandPart>
        <name>Fe</name>
        <dbReference type="ChEBI" id="CHEBI:18248"/>
    </ligandPart>
</feature>
<feature type="sequence variant" description="Probable allelic variation.">
    <original>I</original>
    <variation>V</variation>
    <location>
        <position position="221"/>
    </location>
</feature>
<feature type="strand" evidence="4">
    <location>
        <begin position="58"/>
        <end position="62"/>
    </location>
</feature>
<feature type="strand" evidence="4">
    <location>
        <begin position="65"/>
        <end position="68"/>
    </location>
</feature>
<feature type="helix" evidence="4">
    <location>
        <begin position="70"/>
        <end position="72"/>
    </location>
</feature>
<feature type="helix" evidence="4">
    <location>
        <begin position="78"/>
        <end position="85"/>
    </location>
</feature>
<feature type="helix" evidence="4">
    <location>
        <begin position="90"/>
        <end position="93"/>
    </location>
</feature>
<feature type="helix" evidence="4">
    <location>
        <begin position="96"/>
        <end position="100"/>
    </location>
</feature>
<feature type="helix" evidence="4">
    <location>
        <begin position="105"/>
        <end position="108"/>
    </location>
</feature>
<feature type="helix" evidence="4">
    <location>
        <begin position="112"/>
        <end position="119"/>
    </location>
</feature>
<feature type="helix" evidence="4">
    <location>
        <begin position="121"/>
        <end position="125"/>
    </location>
</feature>
<feature type="strand" evidence="4">
    <location>
        <begin position="127"/>
        <end position="129"/>
    </location>
</feature>
<feature type="helix" evidence="4">
    <location>
        <begin position="131"/>
        <end position="134"/>
    </location>
</feature>
<feature type="strand" evidence="4">
    <location>
        <begin position="138"/>
        <end position="141"/>
    </location>
</feature>
<feature type="helix" evidence="4">
    <location>
        <begin position="145"/>
        <end position="147"/>
    </location>
</feature>
<feature type="strand" evidence="4">
    <location>
        <begin position="148"/>
        <end position="150"/>
    </location>
</feature>
<feature type="helix" evidence="4">
    <location>
        <begin position="151"/>
        <end position="162"/>
    </location>
</feature>
<feature type="helix" evidence="4">
    <location>
        <begin position="163"/>
        <end position="167"/>
    </location>
</feature>
<feature type="strand" evidence="4">
    <location>
        <begin position="170"/>
        <end position="172"/>
    </location>
</feature>
<feature type="strand" evidence="4">
    <location>
        <begin position="178"/>
        <end position="183"/>
    </location>
</feature>
<feature type="helix" evidence="4">
    <location>
        <begin position="185"/>
        <end position="187"/>
    </location>
</feature>
<feature type="helix" evidence="4">
    <location>
        <begin position="188"/>
        <end position="196"/>
    </location>
</feature>
<feature type="turn" evidence="4">
    <location>
        <begin position="197"/>
        <end position="199"/>
    </location>
</feature>
<feature type="strand" evidence="4">
    <location>
        <begin position="206"/>
        <end position="210"/>
    </location>
</feature>
<feature type="turn" evidence="4">
    <location>
        <begin position="217"/>
        <end position="221"/>
    </location>
</feature>
<feature type="helix" evidence="4">
    <location>
        <begin position="230"/>
        <end position="240"/>
    </location>
</feature>
<feature type="turn" evidence="4">
    <location>
        <begin position="241"/>
        <end position="245"/>
    </location>
</feature>
<feature type="helix" evidence="4">
    <location>
        <begin position="248"/>
        <end position="250"/>
    </location>
</feature>
<feature type="strand" evidence="4">
    <location>
        <begin position="259"/>
        <end position="261"/>
    </location>
</feature>
<feature type="helix" evidence="4">
    <location>
        <begin position="271"/>
        <end position="273"/>
    </location>
</feature>
<feature type="strand" evidence="4">
    <location>
        <begin position="274"/>
        <end position="293"/>
    </location>
</feature>
<feature type="strand" evidence="4">
    <location>
        <begin position="306"/>
        <end position="313"/>
    </location>
</feature>
<feature type="helix" evidence="4">
    <location>
        <begin position="314"/>
        <end position="316"/>
    </location>
</feature>
<feature type="helix" evidence="4">
    <location>
        <begin position="317"/>
        <end position="331"/>
    </location>
</feature>
<feature type="helix" evidence="4">
    <location>
        <begin position="337"/>
        <end position="339"/>
    </location>
</feature>
<feature type="helix" evidence="4">
    <location>
        <begin position="342"/>
        <end position="349"/>
    </location>
</feature>
<feature type="helix" evidence="4">
    <location>
        <begin position="351"/>
        <end position="359"/>
    </location>
</feature>
<feature type="strand" evidence="4">
    <location>
        <begin position="386"/>
        <end position="390"/>
    </location>
</feature>
<feature type="strand" evidence="4">
    <location>
        <begin position="396"/>
        <end position="401"/>
    </location>
</feature>
<feature type="helix" evidence="4">
    <location>
        <begin position="404"/>
        <end position="406"/>
    </location>
</feature>
<feature type="helix" evidence="4">
    <location>
        <begin position="410"/>
        <end position="423"/>
    </location>
</feature>
<feature type="strand" evidence="4">
    <location>
        <begin position="424"/>
        <end position="431"/>
    </location>
</feature>
<feature type="turn" evidence="4">
    <location>
        <begin position="432"/>
        <end position="434"/>
    </location>
</feature>
<feature type="strand" evidence="4">
    <location>
        <begin position="435"/>
        <end position="442"/>
    </location>
</feature>
<feature type="turn" evidence="4">
    <location>
        <begin position="443"/>
        <end position="445"/>
    </location>
</feature>
<feature type="helix" evidence="4">
    <location>
        <begin position="446"/>
        <end position="449"/>
    </location>
</feature>
<feature type="helix" evidence="4">
    <location>
        <begin position="453"/>
        <end position="456"/>
    </location>
</feature>
<feature type="turn" evidence="4">
    <location>
        <begin position="465"/>
        <end position="468"/>
    </location>
</feature>
<feature type="strand" evidence="4">
    <location>
        <begin position="469"/>
        <end position="472"/>
    </location>
</feature>
<feature type="helix" evidence="4">
    <location>
        <begin position="475"/>
        <end position="477"/>
    </location>
</feature>
<feature type="helix" evidence="4">
    <location>
        <begin position="487"/>
        <end position="500"/>
    </location>
</feature>
<feature type="strand" evidence="4">
    <location>
        <begin position="508"/>
        <end position="514"/>
    </location>
</feature>
<feature type="helix" evidence="4">
    <location>
        <begin position="521"/>
        <end position="523"/>
    </location>
</feature>
<feature type="strand" evidence="4">
    <location>
        <begin position="524"/>
        <end position="534"/>
    </location>
</feature>
<feature type="strand" evidence="4">
    <location>
        <begin position="540"/>
        <end position="548"/>
    </location>
</feature>
<feature type="strand" evidence="4">
    <location>
        <begin position="560"/>
        <end position="567"/>
    </location>
</feature>
<feature type="turn" evidence="4">
    <location>
        <begin position="568"/>
        <end position="570"/>
    </location>
</feature>
<feature type="helix" evidence="4">
    <location>
        <begin position="571"/>
        <end position="582"/>
    </location>
</feature>
<name>NIR_SPIOL</name>
<accession>P05314</accession>
<keyword id="KW-0002">3D-structure</keyword>
<keyword id="KW-0004">4Fe-4S</keyword>
<keyword id="KW-0150">Chloroplast</keyword>
<keyword id="KW-0903">Direct protein sequencing</keyword>
<keyword id="KW-0249">Electron transport</keyword>
<keyword id="KW-0349">Heme</keyword>
<keyword id="KW-0408">Iron</keyword>
<keyword id="KW-0411">Iron-sulfur</keyword>
<keyword id="KW-0479">Metal-binding</keyword>
<keyword id="KW-0534">Nitrate assimilation</keyword>
<keyword id="KW-0560">Oxidoreductase</keyword>
<keyword id="KW-0934">Plastid</keyword>
<keyword id="KW-1185">Reference proteome</keyword>
<keyword id="KW-0809">Transit peptide</keyword>
<keyword id="KW-0813">Transport</keyword>
<reference key="1">
    <citation type="journal article" date="1988" name="Mol. Gen. Genet.">
        <title>Isolation of cDNA clones coding for spinach nitrite reductase: complete sequence and nitrate induction.</title>
        <authorList>
            <person name="Back E."/>
            <person name="Burkhart W."/>
            <person name="Moyer M."/>
            <person name="Privalle L."/>
            <person name="Rothstein S."/>
        </authorList>
    </citation>
    <scope>NUCLEOTIDE SEQUENCE [MRNA]</scope>
    <scope>PARTIAL PROTEIN SEQUENCE</scope>
</reference>
<reference key="2">
    <citation type="journal article" date="1991" name="Plant Mol. Biol.">
        <title>Isolation of the spinach nitrite reductase gene promoter which confers nitrate inducibility on GUS gene expression in transgenic tobacco.</title>
        <authorList>
            <person name="Back E."/>
            <person name="Dunne W."/>
            <person name="Schneiderbauer A."/>
            <person name="de Framond A."/>
            <person name="Rastogi R."/>
            <person name="Rothstein S.J."/>
        </authorList>
    </citation>
    <scope>NUCLEOTIDE SEQUENCE [GENOMIC DNA]</scope>
    <source>
        <strain>cv. Dark green Bloomsdale</strain>
        <tissue>Leaf</tissue>
    </source>
</reference>
<reference key="3">
    <citation type="journal article" date="2005" name="Biochemistry">
        <title>Structure of spinach nitrite reductase: implications for multi-electron reactions by the iron-sulfur:siroheme cofactor.</title>
        <authorList>
            <person name="Swamy U."/>
            <person name="Wang M."/>
            <person name="Tripathy J.N."/>
            <person name="Kim S.K."/>
            <person name="Hirasawa M."/>
            <person name="Knaff D.B."/>
            <person name="Allen J.P."/>
        </authorList>
    </citation>
    <scope>X-RAY CRYSTALLOGRAPHY (2.8 ANGSTROMS)</scope>
    <scope>IRON-CLUSTER BINDING AT CYS-473; CYS-479; CYS-514 AND CYS-518</scope>
    <scope>HEME BINDING AT CYS-518</scope>
</reference>